<organism>
    <name type="scientific">Pan troglodytes</name>
    <name type="common">Chimpanzee</name>
    <dbReference type="NCBI Taxonomy" id="9598"/>
    <lineage>
        <taxon>Eukaryota</taxon>
        <taxon>Metazoa</taxon>
        <taxon>Chordata</taxon>
        <taxon>Craniata</taxon>
        <taxon>Vertebrata</taxon>
        <taxon>Euteleostomi</taxon>
        <taxon>Mammalia</taxon>
        <taxon>Eutheria</taxon>
        <taxon>Euarchontoglires</taxon>
        <taxon>Primates</taxon>
        <taxon>Haplorrhini</taxon>
        <taxon>Catarrhini</taxon>
        <taxon>Hominidae</taxon>
        <taxon>Pan</taxon>
    </lineage>
</organism>
<protein>
    <recommendedName>
        <fullName>Atrophin-1</fullName>
    </recommendedName>
    <alternativeName>
        <fullName>Dentatorubral-pallidoluysian atrophy protein homolog</fullName>
    </alternativeName>
</protein>
<accession>Q5IS70</accession>
<name>ATN1_PANTR</name>
<proteinExistence type="evidence at transcript level"/>
<gene>
    <name type="primary">ATN1</name>
    <name type="synonym">DRPLA</name>
</gene>
<sequence>MKTRQNKDSMSMRSGRKKEAPGPREELRSRGRASPGGVSTSSSDGKAEKSRQTAKKARVEEASTPKVNKQGRSEEISESESEETNAPKKTKTEELPRPQSPSDLDSLDGRSLNDDGSSDPRDIDQDNRSTSPSIYSPGSVENDSDSSSGLSQGPARPYHPPPLFPPSPQPPDSTPRQPEASFEPHPSVTPTGYHAPMEPPTSRMFQAPPGAPPPHPQLYPGGTGGVLSGPPMGPKGGGAASSVGGPNGGKQHPPPTTPISVSSSGASGAPPTKPPTTPVGGGNLPSAPPPANFPHVTPNLPPPPALRPLNNASASPPGLGAQPLPGHLPSPHAMGQGMGGLPPGPEKGPTLAPSPHSLPPASSSAPAPPMRFPYSSSSSSSAAASSSSSSSSSSASPFPASQALPSYPHSFPPPTSLSVSNQPPKYTQPSLPSQAVWSQGPPPPPPYGRLLANSNAHPGPFPPSTGAQSTAHPPVSTHHHHHQQQQQQQQQQQQQQQQHHGNSGPPPPGAFPHPLEGGSSHHAHPYAMSPSLGSLRPYPPGPAHLPPPHSQVSYSQAGPNGPPVSSSSNSSSSTSQGSYPCSHPSPSQGPQGAPYPFPPVPTVTTSSATLSTVIATVASSPAGYKTASPPGPPPYGKRAPSPGAYKTATPPGYKPGSPPSFRTGTPPGYRGTSPPAGPGTFKPGSPTVGPGPLPPAGPSGLPSLPPPPAAPASGPPLSATQIKQEPAEEYETPESPVPPARSPSPPPKVVDVPSHASQSARFNKHLDRGFNSCARSDLYFVPLEGSKLAKKRADLVEKVRREAEQRAREEKEREREREREKEREREKERELERSVKLAQEGRAPVECPSLGPVPHRPPFEPGSAVATVPPYLGPDTPALRTLSEYARPHVMSPGNRNHPFYVPLGAVDPGLLGYNVPALYSSDPAAREREREARERDLRDRLKPGFEVKPSELEPLHGVPGPGLDPFPRHGGLALQPGPPGLHPFPFHPSLGPLERERLALAAGPALRPDMSYAERLAAERQHAERVAALGNDPLARLQMLNVTPHHHQHSHIHSHLHLHQQDAIHAASASVHPLIDPLASGSHLTRIPYPAGTLPNPLLPHPLHENEVLRHQLFAAPYRDLPASLSAPMSAAHQLQAMHAQSAELQRLALEQQQWLHAHHPLHSVPLPAQEDYYSHLKKESDKPL</sequence>
<keyword id="KW-0007">Acetylation</keyword>
<keyword id="KW-0965">Cell junction</keyword>
<keyword id="KW-0963">Cytoplasm</keyword>
<keyword id="KW-1017">Isopeptide bond</keyword>
<keyword id="KW-0488">Methylation</keyword>
<keyword id="KW-0539">Nucleus</keyword>
<keyword id="KW-0597">Phosphoprotein</keyword>
<keyword id="KW-1185">Reference proteome</keyword>
<keyword id="KW-0804">Transcription</keyword>
<keyword id="KW-0805">Transcription regulation</keyword>
<keyword id="KW-0832">Ubl conjugation</keyword>
<comment type="function">
    <text evidence="2">Transcriptional corepressor. Corepressor of MTG8 transcriptional repression. Recruits NR2E1 to repress transcription. Has some intrinsic repression activity. Promotes vascular smooth cell (VSMC) migration and orientation (By similarity).</text>
</comment>
<comment type="subunit">
    <text evidence="4">Interacts with NR2E1; the interaction represses the transcriptional activity of NR2E1. Interacts with BAIAP2, WWP1, WWP2, WWP3 and RERE. Interacts (via its N-terminus) with MTG8; the interaction enhances transcriptional repression of MTG8. Interacts with FAT1 (via a C-terminal domain). Interacts with PQBP1 (By similarity).</text>
</comment>
<comment type="subcellular location">
    <subcellularLocation>
        <location evidence="3">Nucleus</location>
    </subcellularLocation>
    <subcellularLocation>
        <location evidence="3">Cytoplasm</location>
        <location evidence="3">Perinuclear region</location>
    </subcellularLocation>
    <subcellularLocation>
        <location evidence="3">Cell junction</location>
    </subcellularLocation>
    <text evidence="2 3">Shuttles between nucleus and cytoplasm. Colocalizes with FAT1 in the perinuclear area, at cell-cell junctions and leading edges of cells. Colocalizes with MTG8 in discrete nuclear dots (By similarity).</text>
</comment>
<comment type="PTM">
    <text evidence="1">Phosphorylated in vitro by MAPK8/JNK1 on Ser-735.</text>
</comment>
<feature type="chain" id="PRO_0000064731" description="Atrophin-1">
    <location>
        <begin position="1"/>
        <end position="1186"/>
    </location>
</feature>
<feature type="region of interest" description="Disordered" evidence="5">
    <location>
        <begin position="1"/>
        <end position="604"/>
    </location>
</feature>
<feature type="region of interest" description="Involved in binding BAIAP2" evidence="1">
    <location>
        <begin position="513"/>
        <end position="563"/>
    </location>
</feature>
<feature type="region of interest" description="Disordered" evidence="5">
    <location>
        <begin position="618"/>
        <end position="763"/>
    </location>
</feature>
<feature type="region of interest" description="Disordered" evidence="5">
    <location>
        <begin position="781"/>
        <end position="858"/>
    </location>
</feature>
<feature type="region of interest" description="Required for interaction with FAT1" evidence="1">
    <location>
        <begin position="875"/>
        <end position="890"/>
    </location>
</feature>
<feature type="short sequence motif" description="Nuclear localization signal" evidence="1">
    <location>
        <begin position="16"/>
        <end position="32"/>
    </location>
</feature>
<feature type="short sequence motif" description="Nuclear export signal" evidence="1">
    <location>
        <begin position="1029"/>
        <end position="1037"/>
    </location>
</feature>
<feature type="compositionally biased region" description="Basic and acidic residues" evidence="5">
    <location>
        <begin position="17"/>
        <end position="29"/>
    </location>
</feature>
<feature type="compositionally biased region" description="Basic and acidic residues" evidence="5">
    <location>
        <begin position="45"/>
        <end position="63"/>
    </location>
</feature>
<feature type="compositionally biased region" description="Basic and acidic residues" evidence="5">
    <location>
        <begin position="107"/>
        <end position="127"/>
    </location>
</feature>
<feature type="compositionally biased region" description="Polar residues" evidence="5">
    <location>
        <begin position="128"/>
        <end position="151"/>
    </location>
</feature>
<feature type="compositionally biased region" description="Pro residues" evidence="5">
    <location>
        <begin position="157"/>
        <end position="173"/>
    </location>
</feature>
<feature type="compositionally biased region" description="Low complexity" evidence="5">
    <location>
        <begin position="258"/>
        <end position="270"/>
    </location>
</feature>
<feature type="compositionally biased region" description="Low complexity" evidence="5">
    <location>
        <begin position="349"/>
        <end position="365"/>
    </location>
</feature>
<feature type="compositionally biased region" description="Low complexity" evidence="5">
    <location>
        <begin position="375"/>
        <end position="396"/>
    </location>
</feature>
<feature type="compositionally biased region" description="Polar residues" evidence="5">
    <location>
        <begin position="416"/>
        <end position="437"/>
    </location>
</feature>
<feature type="compositionally biased region" description="Low complexity" evidence="5">
    <location>
        <begin position="484"/>
        <end position="503"/>
    </location>
</feature>
<feature type="compositionally biased region" description="Pro residues" evidence="5">
    <location>
        <begin position="537"/>
        <end position="549"/>
    </location>
</feature>
<feature type="compositionally biased region" description="Low complexity" evidence="5">
    <location>
        <begin position="565"/>
        <end position="582"/>
    </location>
</feature>
<feature type="compositionally biased region" description="Low complexity" evidence="5">
    <location>
        <begin position="618"/>
        <end position="628"/>
    </location>
</feature>
<feature type="compositionally biased region" description="Pro residues" evidence="5">
    <location>
        <begin position="689"/>
        <end position="714"/>
    </location>
</feature>
<feature type="compositionally biased region" description="Pro residues" evidence="5">
    <location>
        <begin position="735"/>
        <end position="748"/>
    </location>
</feature>
<feature type="compositionally biased region" description="Basic and acidic residues" evidence="5">
    <location>
        <begin position="791"/>
        <end position="835"/>
    </location>
</feature>
<feature type="modified residue" description="Phosphoserine" evidence="4">
    <location>
        <position position="34"/>
    </location>
</feature>
<feature type="modified residue" description="Phosphoserine" evidence="4">
    <location>
        <position position="77"/>
    </location>
</feature>
<feature type="modified residue" description="Phosphoserine" evidence="4">
    <location>
        <position position="79"/>
    </location>
</feature>
<feature type="modified residue" description="Phosphoserine" evidence="4">
    <location>
        <position position="100"/>
    </location>
</feature>
<feature type="modified residue" description="Phosphoserine" evidence="4">
    <location>
        <position position="102"/>
    </location>
</feature>
<feature type="modified residue" description="Phosphoserine" evidence="4">
    <location>
        <position position="106"/>
    </location>
</feature>
<feature type="modified residue" description="Phosphoserine" evidence="4">
    <location>
        <position position="628"/>
    </location>
</feature>
<feature type="modified residue" description="N6-acetyllysine" evidence="4">
    <location>
        <position position="637"/>
    </location>
</feature>
<feature type="modified residue" description="Phosphothreonine" evidence="4">
    <location>
        <position position="649"/>
    </location>
</feature>
<feature type="modified residue" description="Phosphoserine" evidence="4">
    <location>
        <position position="657"/>
    </location>
</feature>
<feature type="modified residue" description="Phosphothreonine" evidence="4">
    <location>
        <position position="665"/>
    </location>
</feature>
<feature type="modified residue" description="Phosphoserine; by MAPK8" evidence="4">
    <location>
        <position position="735"/>
    </location>
</feature>
<feature type="modified residue" description="Phosphoserine" evidence="4">
    <location>
        <position position="742"/>
    </location>
</feature>
<feature type="modified residue" description="Phosphoserine" evidence="4">
    <location>
        <position position="744"/>
    </location>
</feature>
<feature type="modified residue" description="Phosphoserine" evidence="4">
    <location>
        <position position="892"/>
    </location>
</feature>
<feature type="modified residue" description="Asymmetric dimethylarginine" evidence="2">
    <location>
        <position position="1111"/>
    </location>
</feature>
<feature type="cross-link" description="Glycyl lysine isopeptide (Lys-Gly) (interchain with G-Cter in SUMO2)" evidence="4">
    <location>
        <position position="1179"/>
    </location>
</feature>
<reference key="1">
    <citation type="journal article" date="2004" name="Cell">
        <title>Accelerated evolution of nervous system genes in the origin of Homo sapiens.</title>
        <authorList>
            <person name="Dorus S."/>
            <person name="Vallender E.J."/>
            <person name="Evans P.D."/>
            <person name="Anderson J.R."/>
            <person name="Gilbert S.L."/>
            <person name="Mahowald M."/>
            <person name="Wyckoff G.J."/>
            <person name="Malcom C.M."/>
            <person name="Lahn B.T."/>
        </authorList>
    </citation>
    <scope>NUCLEOTIDE SEQUENCE [MRNA]</scope>
</reference>
<evidence type="ECO:0000250" key="1"/>
<evidence type="ECO:0000250" key="2">
    <source>
        <dbReference type="UniProtKB" id="O35126"/>
    </source>
</evidence>
<evidence type="ECO:0000250" key="3">
    <source>
        <dbReference type="UniProtKB" id="P54258"/>
    </source>
</evidence>
<evidence type="ECO:0000250" key="4">
    <source>
        <dbReference type="UniProtKB" id="P54259"/>
    </source>
</evidence>
<evidence type="ECO:0000256" key="5">
    <source>
        <dbReference type="SAM" id="MobiDB-lite"/>
    </source>
</evidence>
<dbReference type="EMBL" id="AY665258">
    <property type="protein sequence ID" value="AAV74296.1"/>
    <property type="molecule type" value="mRNA"/>
</dbReference>
<dbReference type="RefSeq" id="NP_001029337.1">
    <property type="nucleotide sequence ID" value="NM_001034165.1"/>
</dbReference>
<dbReference type="RefSeq" id="XP_016778060.1">
    <property type="nucleotide sequence ID" value="XM_016922571.4"/>
</dbReference>
<dbReference type="SMR" id="Q5IS70"/>
<dbReference type="FunCoup" id="Q5IS70">
    <property type="interactions" value="2156"/>
</dbReference>
<dbReference type="STRING" id="9598.ENSPTRP00000060554"/>
<dbReference type="PaxDb" id="9598-ENSPTRP00000060554"/>
<dbReference type="GeneID" id="451803"/>
<dbReference type="KEGG" id="ptr:451803"/>
<dbReference type="CTD" id="1822"/>
<dbReference type="eggNOG" id="KOG2133">
    <property type="taxonomic scope" value="Eukaryota"/>
</dbReference>
<dbReference type="InParanoid" id="Q5IS70"/>
<dbReference type="Proteomes" id="UP000002277">
    <property type="component" value="Unplaced"/>
</dbReference>
<dbReference type="GO" id="GO:0070161">
    <property type="term" value="C:anchoring junction"/>
    <property type="evidence" value="ECO:0007669"/>
    <property type="project" value="UniProtKB-SubCell"/>
</dbReference>
<dbReference type="GO" id="GO:0005634">
    <property type="term" value="C:nucleus"/>
    <property type="evidence" value="ECO:0000318"/>
    <property type="project" value="GO_Central"/>
</dbReference>
<dbReference type="GO" id="GO:0048471">
    <property type="term" value="C:perinuclear region of cytoplasm"/>
    <property type="evidence" value="ECO:0007669"/>
    <property type="project" value="UniProtKB-SubCell"/>
</dbReference>
<dbReference type="GO" id="GO:0003714">
    <property type="term" value="F:transcription corepressor activity"/>
    <property type="evidence" value="ECO:0000318"/>
    <property type="project" value="GO_Central"/>
</dbReference>
<dbReference type="InterPro" id="IPR017993">
    <property type="entry name" value="Atrophin-1"/>
</dbReference>
<dbReference type="InterPro" id="IPR002951">
    <property type="entry name" value="Atrophin-like"/>
</dbReference>
<dbReference type="PANTHER" id="PTHR13859:SF9">
    <property type="entry name" value="ATROPHIN-1"/>
    <property type="match status" value="1"/>
</dbReference>
<dbReference type="PANTHER" id="PTHR13859">
    <property type="entry name" value="ATROPHIN-RELATED"/>
    <property type="match status" value="1"/>
</dbReference>
<dbReference type="Pfam" id="PF03154">
    <property type="entry name" value="Atrophin-1"/>
    <property type="match status" value="2"/>
</dbReference>
<dbReference type="PRINTS" id="PR01222">
    <property type="entry name" value="ATROPHIN"/>
</dbReference>